<organism>
    <name type="scientific">Mus musculus</name>
    <name type="common">Mouse</name>
    <dbReference type="NCBI Taxonomy" id="10090"/>
    <lineage>
        <taxon>Eukaryota</taxon>
        <taxon>Metazoa</taxon>
        <taxon>Chordata</taxon>
        <taxon>Craniata</taxon>
        <taxon>Vertebrata</taxon>
        <taxon>Euteleostomi</taxon>
        <taxon>Mammalia</taxon>
        <taxon>Eutheria</taxon>
        <taxon>Euarchontoglires</taxon>
        <taxon>Glires</taxon>
        <taxon>Rodentia</taxon>
        <taxon>Myomorpha</taxon>
        <taxon>Muroidea</taxon>
        <taxon>Muridae</taxon>
        <taxon>Murinae</taxon>
        <taxon>Mus</taxon>
        <taxon>Mus</taxon>
    </lineage>
</organism>
<gene>
    <name type="primary">Tmem151b</name>
    <name type="synonym">Gm323</name>
</gene>
<feature type="chain" id="PRO_0000307221" description="Transmembrane protein 151B">
    <location>
        <begin position="1"/>
        <end position="561"/>
    </location>
</feature>
<feature type="transmembrane region" description="Helical" evidence="1">
    <location>
        <begin position="59"/>
        <end position="79"/>
    </location>
</feature>
<feature type="transmembrane region" description="Helical" evidence="1">
    <location>
        <begin position="106"/>
        <end position="126"/>
    </location>
</feature>
<feature type="region of interest" description="Disordered" evidence="2">
    <location>
        <begin position="1"/>
        <end position="42"/>
    </location>
</feature>
<feature type="region of interest" description="Disordered" evidence="2">
    <location>
        <begin position="489"/>
        <end position="523"/>
    </location>
</feature>
<feature type="compositionally biased region" description="Low complexity" evidence="2">
    <location>
        <begin position="1"/>
        <end position="10"/>
    </location>
</feature>
<feature type="compositionally biased region" description="Gly residues" evidence="2">
    <location>
        <begin position="11"/>
        <end position="22"/>
    </location>
</feature>
<feature type="compositionally biased region" description="Polar residues" evidence="2">
    <location>
        <begin position="489"/>
        <end position="507"/>
    </location>
</feature>
<feature type="compositionally biased region" description="Acidic residues" evidence="2">
    <location>
        <begin position="510"/>
        <end position="519"/>
    </location>
</feature>
<proteinExistence type="evidence at transcript level"/>
<sequence length="561" mass="61706">MSPPGSAAGESAGGGGGGGGSGVPEEPMASADEGPAREEQRPIQPSFTKSLCRESHWKCLLLSLLMYGCLGAVAWCHVTTVTRLTFSSAYQGNSLMYHDSPCSNGYVYIPLAFLLMLYAVYLVECWHCQARHELQHRVDVSSVQERVGRMQQATPCIWWKAISYHYVRRTRQVTRYRNGDAYTTTQVYHERVNTHVAEAEFDYARCGVRDVSKTLVGLEGAPATRLRFTKCFSFASVEAENAYLCQRARFFAENEGLDDYMEAREGMHLKNVDFREFMVAFPDPARPPWYACSSAFWAAALLTLSWPLRVLAEYRTAYAHYHVEKLFGLEGPGSASSVGGGLSPSDELLPPLTHRLPRVNTVDSTELEWHIRSNQQLVPSYSEVLLMDLVELGSRCGGPGGSYVPRCRYGGVGGPGAAGVTPHWRSCEHCQRAVSSSSIFSRSALSICASPRAAQGPGASAGCGGSRFSLSRLYGSRRSCLWRSRSGSVNEASCPTEQTRLSSQASMRDNEEDEDEEEAGPPPPYQDALCFPVLIVHRQEGCLGHSHRSLHRHGSCVETSL</sequence>
<keyword id="KW-0472">Membrane</keyword>
<keyword id="KW-1185">Reference proteome</keyword>
<keyword id="KW-0812">Transmembrane</keyword>
<keyword id="KW-1133">Transmembrane helix</keyword>
<comment type="subcellular location">
    <subcellularLocation>
        <location evidence="3">Membrane</location>
        <topology evidence="3">Multi-pass membrane protein</topology>
    </subcellularLocation>
</comment>
<comment type="similarity">
    <text evidence="3">Belongs to the TMEM151 family.</text>
</comment>
<name>T151B_MOUSE</name>
<dbReference type="EMBL" id="BC079879">
    <property type="protein sequence ID" value="AAH79879.1"/>
    <property type="molecule type" value="mRNA"/>
</dbReference>
<dbReference type="EMBL" id="BC083182">
    <property type="protein sequence ID" value="AAH83182.1"/>
    <property type="molecule type" value="mRNA"/>
</dbReference>
<dbReference type="CCDS" id="CCDS28810.1"/>
<dbReference type="RefSeq" id="NP_001013771.1">
    <property type="nucleotide sequence ID" value="NM_001013749.3"/>
</dbReference>
<dbReference type="FunCoup" id="Q68FE7">
    <property type="interactions" value="11"/>
</dbReference>
<dbReference type="STRING" id="10090.ENSMUSP00000136337"/>
<dbReference type="iPTMnet" id="Q68FE7"/>
<dbReference type="PhosphoSitePlus" id="Q68FE7"/>
<dbReference type="SwissPalm" id="Q68FE7"/>
<dbReference type="PaxDb" id="10090-ENSMUSP00000136337"/>
<dbReference type="ProteomicsDB" id="254803"/>
<dbReference type="Antibodypedia" id="65189">
    <property type="antibodies" value="70 antibodies from 15 providers"/>
</dbReference>
<dbReference type="Ensembl" id="ENSMUST00000180252.3">
    <property type="protein sequence ID" value="ENSMUSP00000136337.2"/>
    <property type="gene ID" value="ENSMUSG00000096847.3"/>
</dbReference>
<dbReference type="GeneID" id="210573"/>
<dbReference type="KEGG" id="mmu:210573"/>
<dbReference type="UCSC" id="uc008cqu.2">
    <property type="organism name" value="mouse"/>
</dbReference>
<dbReference type="AGR" id="MGI:2685169"/>
<dbReference type="CTD" id="441151"/>
<dbReference type="MGI" id="MGI:2685169">
    <property type="gene designation" value="Tmem151b"/>
</dbReference>
<dbReference type="VEuPathDB" id="HostDB:ENSMUSG00000096847"/>
<dbReference type="eggNOG" id="ENOG502QSYQ">
    <property type="taxonomic scope" value="Eukaryota"/>
</dbReference>
<dbReference type="GeneTree" id="ENSGT00390000013762"/>
<dbReference type="HOGENOM" id="CLU_023650_2_0_1"/>
<dbReference type="InParanoid" id="Q68FE7"/>
<dbReference type="OMA" id="WYASNST"/>
<dbReference type="OrthoDB" id="190434at2759"/>
<dbReference type="PhylomeDB" id="Q68FE7"/>
<dbReference type="TreeFam" id="TF315223"/>
<dbReference type="BioGRID-ORCS" id="210573">
    <property type="hits" value="1 hit in 78 CRISPR screens"/>
</dbReference>
<dbReference type="ChiTaRS" id="Tmem151b">
    <property type="organism name" value="mouse"/>
</dbReference>
<dbReference type="PRO" id="PR:Q68FE7"/>
<dbReference type="Proteomes" id="UP000000589">
    <property type="component" value="Chromosome 17"/>
</dbReference>
<dbReference type="RNAct" id="Q68FE7">
    <property type="molecule type" value="protein"/>
</dbReference>
<dbReference type="Bgee" id="ENSMUSG00000096847">
    <property type="expression patterns" value="Expressed in primary visual cortex and 125 other cell types or tissues"/>
</dbReference>
<dbReference type="GO" id="GO:0016020">
    <property type="term" value="C:membrane"/>
    <property type="evidence" value="ECO:0007669"/>
    <property type="project" value="UniProtKB-SubCell"/>
</dbReference>
<dbReference type="InterPro" id="IPR026767">
    <property type="entry name" value="Tmem151"/>
</dbReference>
<dbReference type="PANTHER" id="PTHR31893">
    <property type="entry name" value="TRANSMEMBRANE PROTEIN 151 HOMOLOG"/>
    <property type="match status" value="1"/>
</dbReference>
<dbReference type="PANTHER" id="PTHR31893:SF4">
    <property type="entry name" value="TRANSMEMBRANE PROTEIN 151B"/>
    <property type="match status" value="1"/>
</dbReference>
<dbReference type="Pfam" id="PF14857">
    <property type="entry name" value="TMEM151"/>
    <property type="match status" value="1"/>
</dbReference>
<reference key="1">
    <citation type="journal article" date="2004" name="Genome Res.">
        <title>The status, quality, and expansion of the NIH full-length cDNA project: the Mammalian Gene Collection (MGC).</title>
        <authorList>
            <consortium name="The MGC Project Team"/>
        </authorList>
    </citation>
    <scope>NUCLEOTIDE SEQUENCE [LARGE SCALE MRNA]</scope>
    <source>
        <strain>C57BL/6J</strain>
        <tissue>Brain</tissue>
    </source>
</reference>
<protein>
    <recommendedName>
        <fullName>Transmembrane protein 151B</fullName>
    </recommendedName>
</protein>
<evidence type="ECO:0000255" key="1"/>
<evidence type="ECO:0000256" key="2">
    <source>
        <dbReference type="SAM" id="MobiDB-lite"/>
    </source>
</evidence>
<evidence type="ECO:0000305" key="3"/>
<accession>Q68FE7</accession>
<accession>Q5XJV8</accession>